<protein>
    <recommendedName>
        <fullName>Dihydroorotate dehydrogenase B (NAD(+)), catalytic subunit</fullName>
        <shortName>DHOD B</shortName>
        <shortName>DHODase B</shortName>
        <shortName>DHOdehase B</shortName>
        <ecNumber>1.3.1.14</ecNumber>
    </recommendedName>
    <alternativeName>
        <fullName>Dihydroorotate oxidase B</fullName>
    </alternativeName>
    <alternativeName>
        <fullName>Orotate reductase (NADH)</fullName>
    </alternativeName>
</protein>
<evidence type="ECO:0000250" key="1"/>
<evidence type="ECO:0000305" key="2"/>
<comment type="function">
    <text evidence="1">Catalyzes the conversion of dihydroorotate to orotate with NAD(+) as electron acceptor.</text>
</comment>
<comment type="catalytic activity">
    <reaction>
        <text>(S)-dihydroorotate + NAD(+) = orotate + NADH + H(+)</text>
        <dbReference type="Rhea" id="RHEA:13513"/>
        <dbReference type="ChEBI" id="CHEBI:15378"/>
        <dbReference type="ChEBI" id="CHEBI:30839"/>
        <dbReference type="ChEBI" id="CHEBI:30864"/>
        <dbReference type="ChEBI" id="CHEBI:57540"/>
        <dbReference type="ChEBI" id="CHEBI:57945"/>
        <dbReference type="EC" id="1.3.1.14"/>
    </reaction>
</comment>
<comment type="cofactor">
    <cofactor evidence="1">
        <name>FMN</name>
        <dbReference type="ChEBI" id="CHEBI:58210"/>
    </cofactor>
    <text evidence="1">Binds 1 FMN per subunit.</text>
</comment>
<comment type="pathway">
    <text>Pyrimidine metabolism; UMP biosynthesis via de novo pathway; orotate from (S)-dihydroorotate (NAD(+) route): step 1/1.</text>
</comment>
<comment type="subunit">
    <text evidence="1">Heterotetramer of 2 PyrK and 2 PyrD type B subunits.</text>
</comment>
<comment type="subcellular location">
    <subcellularLocation>
        <location evidence="1">Cytoplasm</location>
    </subcellularLocation>
</comment>
<comment type="similarity">
    <text evidence="2">Belongs to the dihydroorotate dehydrogenase family. Type 1 subfamily.</text>
</comment>
<organism>
    <name type="scientific">Listeria monocytogenes serotype 4b (strain CLIP80459)</name>
    <dbReference type="NCBI Taxonomy" id="568819"/>
    <lineage>
        <taxon>Bacteria</taxon>
        <taxon>Bacillati</taxon>
        <taxon>Bacillota</taxon>
        <taxon>Bacilli</taxon>
        <taxon>Bacillales</taxon>
        <taxon>Listeriaceae</taxon>
        <taxon>Listeria</taxon>
    </lineage>
</organism>
<proteinExistence type="inferred from homology"/>
<name>PYRDB_LISMC</name>
<accession>C1KWD2</accession>
<reference key="1">
    <citation type="journal article" date="2012" name="BMC Genomics">
        <title>Comparative genomics and transcriptomics of lineages I, II, and III strains of Listeria monocytogenes.</title>
        <authorList>
            <person name="Hain T."/>
            <person name="Ghai R."/>
            <person name="Billion A."/>
            <person name="Kuenne C.T."/>
            <person name="Steinweg C."/>
            <person name="Izar B."/>
            <person name="Mohamed W."/>
            <person name="Mraheil M."/>
            <person name="Domann E."/>
            <person name="Schaffrath S."/>
            <person name="Karst U."/>
            <person name="Goesmann A."/>
            <person name="Oehm S."/>
            <person name="Puhler A."/>
            <person name="Merkl R."/>
            <person name="Vorwerk S."/>
            <person name="Glaser P."/>
            <person name="Garrido P."/>
            <person name="Rusniok C."/>
            <person name="Buchrieser C."/>
            <person name="Goebel W."/>
            <person name="Chakraborty T."/>
        </authorList>
    </citation>
    <scope>NUCLEOTIDE SEQUENCE [LARGE SCALE GENOMIC DNA]</scope>
    <source>
        <strain>CLIP80459</strain>
    </source>
</reference>
<sequence length="304" mass="32312">MNRLAVEIPGLSLKNPIMPASGCFGFGQEYSKYYDLNELGAIMAKAVTPEPRLGNPTPRVAETASGMLNAIGLQNPGLEHVLAHELPFLEQFETPIIANVAGATEDDYVQVCARIGESKAVKAIELNISCPNVKHGGIAFGTDPDVAHRLTKAVKNVATVPVYVKLSPNVADIVSIAQAIEAAGADGLTMINTLLGMRIDLKTRKPIIANGTGGLSGPAIKPVAIRMIHQVREVSNIPIIGMGGVQTVDDVLEFLIAGADAVAVGTMNFTDPFICPKLISELPKRMDELGISSLQELKKERTNQ</sequence>
<dbReference type="EC" id="1.3.1.14"/>
<dbReference type="EMBL" id="FM242711">
    <property type="protein sequence ID" value="CAS05607.1"/>
    <property type="molecule type" value="Genomic_DNA"/>
</dbReference>
<dbReference type="RefSeq" id="WP_003734794.1">
    <property type="nucleotide sequence ID" value="NC_012488.1"/>
</dbReference>
<dbReference type="SMR" id="C1KWD2"/>
<dbReference type="KEGG" id="lmc:Lm4b_01849"/>
<dbReference type="HOGENOM" id="CLU_042042_0_0_9"/>
<dbReference type="UniPathway" id="UPA00070">
    <property type="reaction ID" value="UER00945"/>
</dbReference>
<dbReference type="GO" id="GO:0005737">
    <property type="term" value="C:cytoplasm"/>
    <property type="evidence" value="ECO:0007669"/>
    <property type="project" value="UniProtKB-SubCell"/>
</dbReference>
<dbReference type="GO" id="GO:0004589">
    <property type="term" value="F:dihydroorotate dehydrogenase (NAD+) activity"/>
    <property type="evidence" value="ECO:0007669"/>
    <property type="project" value="UniProtKB-EC"/>
</dbReference>
<dbReference type="GO" id="GO:0006207">
    <property type="term" value="P:'de novo' pyrimidine nucleobase biosynthetic process"/>
    <property type="evidence" value="ECO:0007669"/>
    <property type="project" value="InterPro"/>
</dbReference>
<dbReference type="GO" id="GO:0044205">
    <property type="term" value="P:'de novo' UMP biosynthetic process"/>
    <property type="evidence" value="ECO:0007669"/>
    <property type="project" value="UniProtKB-UniRule"/>
</dbReference>
<dbReference type="CDD" id="cd04740">
    <property type="entry name" value="DHOD_1B_like"/>
    <property type="match status" value="1"/>
</dbReference>
<dbReference type="FunFam" id="3.20.20.70:FF:000069">
    <property type="entry name" value="Dihydroorotate dehydrogenase"/>
    <property type="match status" value="1"/>
</dbReference>
<dbReference type="Gene3D" id="3.20.20.70">
    <property type="entry name" value="Aldolase class I"/>
    <property type="match status" value="1"/>
</dbReference>
<dbReference type="HAMAP" id="MF_00224">
    <property type="entry name" value="DHO_dh_type1"/>
    <property type="match status" value="1"/>
</dbReference>
<dbReference type="InterPro" id="IPR013785">
    <property type="entry name" value="Aldolase_TIM"/>
</dbReference>
<dbReference type="InterPro" id="IPR050074">
    <property type="entry name" value="DHO_dehydrogenase"/>
</dbReference>
<dbReference type="InterPro" id="IPR033888">
    <property type="entry name" value="DHOD_1B"/>
</dbReference>
<dbReference type="InterPro" id="IPR024920">
    <property type="entry name" value="Dihydroorotate_DH_1"/>
</dbReference>
<dbReference type="InterPro" id="IPR012135">
    <property type="entry name" value="Dihydroorotate_DH_1_2"/>
</dbReference>
<dbReference type="InterPro" id="IPR005720">
    <property type="entry name" value="Dihydroorotate_DH_cat"/>
</dbReference>
<dbReference type="InterPro" id="IPR001295">
    <property type="entry name" value="Dihydroorotate_DH_CS"/>
</dbReference>
<dbReference type="InterPro" id="IPR049622">
    <property type="entry name" value="Dihydroorotate_DH_I"/>
</dbReference>
<dbReference type="NCBIfam" id="NF005574">
    <property type="entry name" value="PRK07259.1"/>
    <property type="match status" value="1"/>
</dbReference>
<dbReference type="NCBIfam" id="TIGR01037">
    <property type="entry name" value="pyrD_sub1_fam"/>
    <property type="match status" value="1"/>
</dbReference>
<dbReference type="PANTHER" id="PTHR48109:SF1">
    <property type="entry name" value="DIHYDROOROTATE DEHYDROGENASE (FUMARATE)"/>
    <property type="match status" value="1"/>
</dbReference>
<dbReference type="PANTHER" id="PTHR48109">
    <property type="entry name" value="DIHYDROOROTATE DEHYDROGENASE (QUINONE), MITOCHONDRIAL-RELATED"/>
    <property type="match status" value="1"/>
</dbReference>
<dbReference type="Pfam" id="PF01180">
    <property type="entry name" value="DHO_dh"/>
    <property type="match status" value="1"/>
</dbReference>
<dbReference type="PIRSF" id="PIRSF000164">
    <property type="entry name" value="DHO_oxidase"/>
    <property type="match status" value="1"/>
</dbReference>
<dbReference type="SUPFAM" id="SSF51395">
    <property type="entry name" value="FMN-linked oxidoreductases"/>
    <property type="match status" value="1"/>
</dbReference>
<dbReference type="PROSITE" id="PS00911">
    <property type="entry name" value="DHODEHASE_1"/>
    <property type="match status" value="1"/>
</dbReference>
<dbReference type="PROSITE" id="PS00912">
    <property type="entry name" value="DHODEHASE_2"/>
    <property type="match status" value="1"/>
</dbReference>
<gene>
    <name type="primary">pyrD</name>
    <name type="ordered locus">Lm4b_01849</name>
</gene>
<feature type="chain" id="PRO_1000204308" description="Dihydroorotate dehydrogenase B (NAD(+)), catalytic subunit">
    <location>
        <begin position="1"/>
        <end position="304"/>
    </location>
</feature>
<feature type="active site" description="Nucleophile">
    <location>
        <position position="130"/>
    </location>
</feature>
<feature type="binding site" evidence="1">
    <location>
        <position position="21"/>
    </location>
    <ligand>
        <name>FMN</name>
        <dbReference type="ChEBI" id="CHEBI:58210"/>
    </ligand>
</feature>
<feature type="binding site" evidence="1">
    <location>
        <begin position="45"/>
        <end position="46"/>
    </location>
    <ligand>
        <name>FMN</name>
        <dbReference type="ChEBI" id="CHEBI:58210"/>
    </ligand>
</feature>
<feature type="binding site" evidence="1">
    <location>
        <position position="45"/>
    </location>
    <ligand>
        <name>substrate</name>
    </ligand>
</feature>
<feature type="binding site" evidence="1">
    <location>
        <begin position="69"/>
        <end position="73"/>
    </location>
    <ligand>
        <name>substrate</name>
    </ligand>
</feature>
<feature type="binding site" evidence="1">
    <location>
        <position position="99"/>
    </location>
    <ligand>
        <name>FMN</name>
        <dbReference type="ChEBI" id="CHEBI:58210"/>
    </ligand>
</feature>
<feature type="binding site" evidence="1">
    <location>
        <position position="127"/>
    </location>
    <ligand>
        <name>FMN</name>
        <dbReference type="ChEBI" id="CHEBI:58210"/>
    </ligand>
</feature>
<feature type="binding site" evidence="1">
    <location>
        <position position="127"/>
    </location>
    <ligand>
        <name>substrate</name>
    </ligand>
</feature>
<feature type="binding site" evidence="1">
    <location>
        <position position="165"/>
    </location>
    <ligand>
        <name>FMN</name>
        <dbReference type="ChEBI" id="CHEBI:58210"/>
    </ligand>
</feature>
<feature type="binding site" evidence="1">
    <location>
        <position position="191"/>
    </location>
    <ligand>
        <name>FMN</name>
        <dbReference type="ChEBI" id="CHEBI:58210"/>
    </ligand>
</feature>
<feature type="binding site" evidence="1">
    <location>
        <begin position="192"/>
        <end position="193"/>
    </location>
    <ligand>
        <name>substrate</name>
    </ligand>
</feature>
<feature type="binding site" evidence="1">
    <location>
        <position position="217"/>
    </location>
    <ligand>
        <name>FMN</name>
        <dbReference type="ChEBI" id="CHEBI:58210"/>
    </ligand>
</feature>
<feature type="binding site" evidence="1">
    <location>
        <begin position="243"/>
        <end position="244"/>
    </location>
    <ligand>
        <name>FMN</name>
        <dbReference type="ChEBI" id="CHEBI:58210"/>
    </ligand>
</feature>
<feature type="binding site" evidence="1">
    <location>
        <begin position="265"/>
        <end position="266"/>
    </location>
    <ligand>
        <name>FMN</name>
        <dbReference type="ChEBI" id="CHEBI:58210"/>
    </ligand>
</feature>
<keyword id="KW-0963">Cytoplasm</keyword>
<keyword id="KW-0285">Flavoprotein</keyword>
<keyword id="KW-0288">FMN</keyword>
<keyword id="KW-0520">NAD</keyword>
<keyword id="KW-0560">Oxidoreductase</keyword>
<keyword id="KW-0665">Pyrimidine biosynthesis</keyword>